<feature type="chain" id="PRO_0000203573" description="Indole-3-acetic acid-amido synthetase GH3.4">
    <location>
        <begin position="1"/>
        <end position="597"/>
    </location>
</feature>
<name>GH34_ARATH</name>
<gene>
    <name type="primary">GH3.4</name>
    <name type="ordered locus">At1g59500</name>
    <name type="ORF">T30E16.2</name>
    <name type="ORF">T4M14.15</name>
</gene>
<keyword id="KW-0436">Ligase</keyword>
<keyword id="KW-1185">Reference proteome</keyword>
<accession>Q9LQ68</accession>
<proteinExistence type="evidence at protein level"/>
<dbReference type="EC" id="6.3.2.-"/>
<dbReference type="EMBL" id="AB076984">
    <property type="protein sequence ID" value="BAB82427.1"/>
    <property type="molecule type" value="Genomic_DNA"/>
</dbReference>
<dbReference type="EMBL" id="AC009317">
    <property type="protein sequence ID" value="AAF79776.1"/>
    <property type="molecule type" value="Genomic_DNA"/>
</dbReference>
<dbReference type="EMBL" id="AC027036">
    <property type="protein sequence ID" value="AAK62800.1"/>
    <property type="molecule type" value="Genomic_DNA"/>
</dbReference>
<dbReference type="EMBL" id="CP002684">
    <property type="protein sequence ID" value="AEE33579.1"/>
    <property type="molecule type" value="Genomic_DNA"/>
</dbReference>
<dbReference type="RefSeq" id="NP_176159.1">
    <property type="nucleotide sequence ID" value="NM_104643.1"/>
</dbReference>
<dbReference type="SMR" id="Q9LQ68"/>
<dbReference type="FunCoup" id="Q9LQ68">
    <property type="interactions" value="1080"/>
</dbReference>
<dbReference type="STRING" id="3702.Q9LQ68"/>
<dbReference type="PaxDb" id="3702-AT1G59500.1"/>
<dbReference type="ProteomicsDB" id="220750"/>
<dbReference type="EnsemblPlants" id="AT1G59500.1">
    <property type="protein sequence ID" value="AT1G59500.1"/>
    <property type="gene ID" value="AT1G59500"/>
</dbReference>
<dbReference type="GeneID" id="842240"/>
<dbReference type="Gramene" id="AT1G59500.1">
    <property type="protein sequence ID" value="AT1G59500.1"/>
    <property type="gene ID" value="AT1G59500"/>
</dbReference>
<dbReference type="KEGG" id="ath:AT1G59500"/>
<dbReference type="Araport" id="AT1G59500"/>
<dbReference type="TAIR" id="AT1G59500">
    <property type="gene designation" value="GH3.4"/>
</dbReference>
<dbReference type="eggNOG" id="ENOG502QR80">
    <property type="taxonomic scope" value="Eukaryota"/>
</dbReference>
<dbReference type="HOGENOM" id="CLU_016249_2_1_1"/>
<dbReference type="InParanoid" id="Q9LQ68"/>
<dbReference type="OMA" id="HENNGCN"/>
<dbReference type="PhylomeDB" id="Q9LQ68"/>
<dbReference type="BioCyc" id="ARA:AT1G59500-MONOMER"/>
<dbReference type="BioCyc" id="MetaCyc:AT1G59500-MONOMER"/>
<dbReference type="PRO" id="PR:Q9LQ68"/>
<dbReference type="Proteomes" id="UP000006548">
    <property type="component" value="Chromosome 1"/>
</dbReference>
<dbReference type="ExpressionAtlas" id="Q9LQ68">
    <property type="expression patterns" value="baseline and differential"/>
</dbReference>
<dbReference type="GO" id="GO:0010279">
    <property type="term" value="F:indole-3-acetic acid amido synthetase activity"/>
    <property type="evidence" value="ECO:0000314"/>
    <property type="project" value="TAIR"/>
</dbReference>
<dbReference type="InterPro" id="IPR004993">
    <property type="entry name" value="GH3"/>
</dbReference>
<dbReference type="InterPro" id="IPR055378">
    <property type="entry name" value="GH3_C"/>
</dbReference>
<dbReference type="InterPro" id="IPR055377">
    <property type="entry name" value="GH3_M"/>
</dbReference>
<dbReference type="PANTHER" id="PTHR31901">
    <property type="entry name" value="GH3 DOMAIN-CONTAINING PROTEIN"/>
    <property type="match status" value="1"/>
</dbReference>
<dbReference type="PANTHER" id="PTHR31901:SF7">
    <property type="entry name" value="INDOLE-3-ACETIC ACID-AMIDO SYNTHETASE GH3.2-RELATED"/>
    <property type="match status" value="1"/>
</dbReference>
<dbReference type="Pfam" id="PF03321">
    <property type="entry name" value="GH3"/>
    <property type="match status" value="1"/>
</dbReference>
<dbReference type="Pfam" id="PF23572">
    <property type="entry name" value="GH3_C"/>
    <property type="match status" value="1"/>
</dbReference>
<dbReference type="Pfam" id="PF23571">
    <property type="entry name" value="GH3_M"/>
    <property type="match status" value="1"/>
</dbReference>
<comment type="function">
    <text evidence="1">Catalyzes the synthesis of indole-3-acetic acid (IAA)-amino acid conjugates, providing a mechanism for the plant to cope with the presence of excess auxin. Strongly reactive with Glu, Gln, Trp, Asp, Ala, Leu, Phe, Gly, Tyr, Met, Ile and Val. Little or no product formation with His, Ser, Thr, Arg, Lys, or Cys. Also active on pyruvic and butyric acid analogs of IAA, PAA and the synthetic auxin naphthaleneacetic acid (NAA). The two chlorinated synthetic auxin herbicides 2,4-D and 3,6-dichloro-o-anisic acid (dicamba) cannot be used as substrates.</text>
</comment>
<comment type="induction">
    <text evidence="1">By auxin.</text>
</comment>
<comment type="similarity">
    <text evidence="2">Belongs to the IAA-amido conjugating enzyme family.</text>
</comment>
<evidence type="ECO:0000269" key="1">
    <source>
    </source>
</evidence>
<evidence type="ECO:0000305" key="2"/>
<protein>
    <recommendedName>
        <fullName>Indole-3-acetic acid-amido synthetase GH3.4</fullName>
        <ecNumber>6.3.2.-</ecNumber>
    </recommendedName>
    <alternativeName>
        <fullName>Auxin-responsive GH3-like protein 4</fullName>
        <shortName>AtGH3-4</shortName>
    </alternativeName>
    <alternativeName>
        <fullName>CF4-like protein</fullName>
    </alternativeName>
</protein>
<organism>
    <name type="scientific">Arabidopsis thaliana</name>
    <name type="common">Mouse-ear cress</name>
    <dbReference type="NCBI Taxonomy" id="3702"/>
    <lineage>
        <taxon>Eukaryota</taxon>
        <taxon>Viridiplantae</taxon>
        <taxon>Streptophyta</taxon>
        <taxon>Embryophyta</taxon>
        <taxon>Tracheophyta</taxon>
        <taxon>Spermatophyta</taxon>
        <taxon>Magnoliopsida</taxon>
        <taxon>eudicotyledons</taxon>
        <taxon>Gunneridae</taxon>
        <taxon>Pentapetalae</taxon>
        <taxon>rosids</taxon>
        <taxon>malvids</taxon>
        <taxon>Brassicales</taxon>
        <taxon>Brassicaceae</taxon>
        <taxon>Camelineae</taxon>
        <taxon>Arabidopsis</taxon>
    </lineage>
</organism>
<sequence>MAVDSLLQSGMASPTTSETEVKALKFIEEITRNPDSVQEKVLGEILSRNSNTEYLKRFDLNGAVDRKSFKSKVPVVIYEDLKTDIQRISNGDRSPILSSHPITEFLTSSGTSAGERKLMPTIEEDINRRQLLGNLLMPVMNLYVPGLDKGKGLYFLFVKSESTTSGGLPARPALTSYYKSDYFRTSDSDSVYTSPKEAILCCDSSQSMYTQMLCGLLMRHEVNRLGAVFPSGLLRAISFLQNNWKELSQDISTGTLSSKIFDHAIKTRMSNILNKPDQELAEFLIGVCSQENWEGIITKIWPNTKYLDVIVTGAMAEYIPMLEYYSGGLPMASMIYASSESYFGINLNPMCKPSEVSYTIFPNMAYFEFLPHNHDGDGGVEATSLVELADVEVGKEYELVITTYAGLYRYRVGDILRVTGFHNSAPQFKFIRRENVLLSIESDKTDEADLQKAVENASRLLAEQGTRVIEYTSYADTKTIPGHYVIYWELLSRDQSNALPSDEVMAKCCLEMEESLNAVYRQSRVSDKSIGPLEIRVVQNGTFEELMDFSISRGSSINQYKVPRCVSLTPIMKLLDSRVVSAHFSPSLPHWSPERRH</sequence>
<reference key="1">
    <citation type="journal article" date="2000" name="Nature">
        <title>Sequence and analysis of chromosome 1 of the plant Arabidopsis thaliana.</title>
        <authorList>
            <person name="Theologis A."/>
            <person name="Ecker J.R."/>
            <person name="Palm C.J."/>
            <person name="Federspiel N.A."/>
            <person name="Kaul S."/>
            <person name="White O."/>
            <person name="Alonso J."/>
            <person name="Altafi H."/>
            <person name="Araujo R."/>
            <person name="Bowman C.L."/>
            <person name="Brooks S.Y."/>
            <person name="Buehler E."/>
            <person name="Chan A."/>
            <person name="Chao Q."/>
            <person name="Chen H."/>
            <person name="Cheuk R.F."/>
            <person name="Chin C.W."/>
            <person name="Chung M.K."/>
            <person name="Conn L."/>
            <person name="Conway A.B."/>
            <person name="Conway A.R."/>
            <person name="Creasy T.H."/>
            <person name="Dewar K."/>
            <person name="Dunn P."/>
            <person name="Etgu P."/>
            <person name="Feldblyum T.V."/>
            <person name="Feng J.-D."/>
            <person name="Fong B."/>
            <person name="Fujii C.Y."/>
            <person name="Gill J.E."/>
            <person name="Goldsmith A.D."/>
            <person name="Haas B."/>
            <person name="Hansen N.F."/>
            <person name="Hughes B."/>
            <person name="Huizar L."/>
            <person name="Hunter J.L."/>
            <person name="Jenkins J."/>
            <person name="Johnson-Hopson C."/>
            <person name="Khan S."/>
            <person name="Khaykin E."/>
            <person name="Kim C.J."/>
            <person name="Koo H.L."/>
            <person name="Kremenetskaia I."/>
            <person name="Kurtz D.B."/>
            <person name="Kwan A."/>
            <person name="Lam B."/>
            <person name="Langin-Hooper S."/>
            <person name="Lee A."/>
            <person name="Lee J.M."/>
            <person name="Lenz C.A."/>
            <person name="Li J.H."/>
            <person name="Li Y.-P."/>
            <person name="Lin X."/>
            <person name="Liu S.X."/>
            <person name="Liu Z.A."/>
            <person name="Luros J.S."/>
            <person name="Maiti R."/>
            <person name="Marziali A."/>
            <person name="Militscher J."/>
            <person name="Miranda M."/>
            <person name="Nguyen M."/>
            <person name="Nierman W.C."/>
            <person name="Osborne B.I."/>
            <person name="Pai G."/>
            <person name="Peterson J."/>
            <person name="Pham P.K."/>
            <person name="Rizzo M."/>
            <person name="Rooney T."/>
            <person name="Rowley D."/>
            <person name="Sakano H."/>
            <person name="Salzberg S.L."/>
            <person name="Schwartz J.R."/>
            <person name="Shinn P."/>
            <person name="Southwick A.M."/>
            <person name="Sun H."/>
            <person name="Tallon L.J."/>
            <person name="Tambunga G."/>
            <person name="Toriumi M.J."/>
            <person name="Town C.D."/>
            <person name="Utterback T."/>
            <person name="Van Aken S."/>
            <person name="Vaysberg M."/>
            <person name="Vysotskaia V.S."/>
            <person name="Walker M."/>
            <person name="Wu D."/>
            <person name="Yu G."/>
            <person name="Fraser C.M."/>
            <person name="Venter J.C."/>
            <person name="Davis R.W."/>
        </authorList>
    </citation>
    <scope>NUCLEOTIDE SEQUENCE [LARGE SCALE GENOMIC DNA]</scope>
    <source>
        <strain>cv. Columbia</strain>
    </source>
</reference>
<reference key="2">
    <citation type="journal article" date="2017" name="Plant J.">
        <title>Araport11: a complete reannotation of the Arabidopsis thaliana reference genome.</title>
        <authorList>
            <person name="Cheng C.Y."/>
            <person name="Krishnakumar V."/>
            <person name="Chan A.P."/>
            <person name="Thibaud-Nissen F."/>
            <person name="Schobel S."/>
            <person name="Town C.D."/>
        </authorList>
    </citation>
    <scope>GENOME REANNOTATION</scope>
    <source>
        <strain>cv. Columbia</strain>
    </source>
</reference>
<reference key="3">
    <citation type="journal article" date="2005" name="Plant Cell">
        <title>Characterization of an Arabidopsis enzyme family that conjugates amino acids to indole-3-acetic acid.</title>
        <authorList>
            <person name="Staswick P.E."/>
            <person name="Serban B."/>
            <person name="Rowe M."/>
            <person name="Tiryaki I."/>
            <person name="Maldonado M.T."/>
            <person name="Maldonado M.C."/>
            <person name="Suza W."/>
        </authorList>
    </citation>
    <scope>FUNCTION</scope>
    <scope>CHARACTERIZATION</scope>
    <scope>INDUCTION</scope>
</reference>
<reference key="4">
    <citation type="journal article" date="2002" name="Plant Mol. Biol.">
        <title>Auxin-responsive gene expression: genes, promoters and regulatory factors.</title>
        <authorList>
            <person name="Hagen G."/>
            <person name="Guilfoyle T.J."/>
        </authorList>
    </citation>
    <scope>NOMENCLATURE</scope>
</reference>